<feature type="chain" id="PRO_0000433461" description="ABC transporter G family member 52">
    <location>
        <begin position="1"/>
        <end position="1388"/>
    </location>
</feature>
<feature type="transmembrane region" description="Helical" evidence="2">
    <location>
        <begin position="503"/>
        <end position="523"/>
    </location>
</feature>
<feature type="transmembrane region" description="Helical" evidence="2">
    <location>
        <begin position="541"/>
        <end position="561"/>
    </location>
</feature>
<feature type="transmembrane region" description="Helical" evidence="2">
    <location>
        <begin position="590"/>
        <end position="610"/>
    </location>
</feature>
<feature type="transmembrane region" description="Helical" evidence="2">
    <location>
        <begin position="621"/>
        <end position="641"/>
    </location>
</feature>
<feature type="transmembrane region" description="Helical" evidence="2">
    <location>
        <begin position="646"/>
        <end position="666"/>
    </location>
</feature>
<feature type="transmembrane region" description="Helical" evidence="2">
    <location>
        <begin position="675"/>
        <end position="695"/>
    </location>
</feature>
<feature type="transmembrane region" description="Helical" evidence="2">
    <location>
        <begin position="732"/>
        <end position="752"/>
    </location>
</feature>
<feature type="transmembrane region" description="Helical" evidence="2">
    <location>
        <begin position="1136"/>
        <end position="1156"/>
    </location>
</feature>
<feature type="transmembrane region" description="Helical" evidence="6">
    <location>
        <begin position="1167"/>
        <end position="1183"/>
    </location>
</feature>
<feature type="transmembrane region" description="Helical" evidence="2">
    <location>
        <begin position="1223"/>
        <end position="1243"/>
    </location>
</feature>
<feature type="transmembrane region" description="Helical" evidence="2">
    <location>
        <begin position="1250"/>
        <end position="1270"/>
    </location>
</feature>
<feature type="transmembrane region" description="Helical" evidence="2">
    <location>
        <begin position="1280"/>
        <end position="1300"/>
    </location>
</feature>
<feature type="transmembrane region" description="Helical" evidence="2">
    <location>
        <begin position="1305"/>
        <end position="1325"/>
    </location>
</feature>
<feature type="transmembrane region" description="Helical" evidence="2">
    <location>
        <begin position="1357"/>
        <end position="1377"/>
    </location>
</feature>
<feature type="domain" description="ABC transporter 1" evidence="3">
    <location>
        <begin position="135"/>
        <end position="406"/>
    </location>
</feature>
<feature type="domain" description="ABC transmembrane type-2 1" evidence="6">
    <location>
        <begin position="484"/>
        <end position="697"/>
    </location>
</feature>
<feature type="domain" description="ABC transporter 2" evidence="3">
    <location>
        <begin position="791"/>
        <end position="1043"/>
    </location>
</feature>
<feature type="domain" description="ABC transmembrane type-2 2" evidence="6">
    <location>
        <begin position="1116"/>
        <end position="1330"/>
    </location>
</feature>
<feature type="region of interest" description="Disordered" evidence="4">
    <location>
        <begin position="1"/>
        <end position="24"/>
    </location>
</feature>
<feature type="binding site" evidence="3">
    <location>
        <begin position="168"/>
        <end position="175"/>
    </location>
    <ligand>
        <name>ATP</name>
        <dbReference type="ChEBI" id="CHEBI:30616"/>
        <label>1</label>
    </ligand>
</feature>
<feature type="binding site" evidence="3">
    <location>
        <begin position="836"/>
        <end position="843"/>
    </location>
    <ligand>
        <name>ATP</name>
        <dbReference type="ChEBI" id="CHEBI:30616"/>
        <label>2</label>
    </ligand>
</feature>
<feature type="splice variant" id="VSP_057781" description="In isoform 2.">
    <original>TSRKD</original>
    <variation>SFTMV</variation>
    <location>
        <begin position="418"/>
        <end position="422"/>
    </location>
</feature>
<feature type="splice variant" id="VSP_057782" description="In isoform 2.">
    <location>
        <begin position="423"/>
        <end position="1388"/>
    </location>
</feature>
<feature type="sequence conflict" description="In Ref. 5; AK072827." evidence="6" ref="5">
    <original>I</original>
    <variation>V</variation>
    <location>
        <position position="886"/>
    </location>
</feature>
<comment type="function">
    <text evidence="1">May be a general defense protein.</text>
</comment>
<comment type="subcellular location">
    <subcellularLocation>
        <location evidence="2">Membrane</location>
        <topology evidence="2">Multi-pass membrane protein</topology>
    </subcellularLocation>
</comment>
<comment type="alternative products">
    <event type="alternative splicing"/>
    <isoform>
        <id>B9G300-1</id>
        <name>1</name>
        <sequence type="displayed"/>
    </isoform>
    <isoform>
        <id>B9G300-2</id>
        <name>2</name>
        <sequence type="described" ref="VSP_057781 VSP_057782"/>
    </isoform>
</comment>
<comment type="miscellaneous">
    <molecule>Isoform 2</molecule>
    <text evidence="6">May be due to an intron retention.</text>
</comment>
<comment type="similarity">
    <text evidence="6">Belongs to the ABC transporter superfamily. ABCG family. PDR (TC 3.A.1.205) subfamily.</text>
</comment>
<comment type="sequence caution" evidence="6">
    <conflict type="erroneous gene model prediction">
        <sequence resource="EMBL-CDS" id="BAD28440"/>
    </conflict>
</comment>
<comment type="sequence caution" evidence="6">
    <conflict type="erroneous gene model prediction">
        <sequence resource="EMBL-CDS" id="BAF24821"/>
    </conflict>
    <text>Was originally thought to correspond to two different genes Os09g0333500 and Os09g0333600.</text>
</comment>
<comment type="sequence caution" evidence="6">
    <conflict type="erroneous gene model prediction">
        <sequence resource="EMBL-CDS" id="BAF24822"/>
    </conflict>
    <text>Was originally thought to correspond to two different genes Os09g0333500 and Os09g0333600.</text>
</comment>
<comment type="sequence caution" evidence="6">
    <conflict type="erroneous gene model prediction">
        <sequence resource="EMBL-CDS" id="EEE69497"/>
    </conflict>
</comment>
<comment type="sequence caution" evidence="6">
    <conflict type="frameshift">
        <sequence resource="EMBL-CDS" id="EEE69497"/>
    </conflict>
</comment>
<proteinExistence type="evidence at transcript level"/>
<name>AB52G_ORYSJ</name>
<keyword id="KW-0025">Alternative splicing</keyword>
<keyword id="KW-0067">ATP-binding</keyword>
<keyword id="KW-0472">Membrane</keyword>
<keyword id="KW-0547">Nucleotide-binding</keyword>
<keyword id="KW-1185">Reference proteome</keyword>
<keyword id="KW-0677">Repeat</keyword>
<keyword id="KW-0812">Transmembrane</keyword>
<keyword id="KW-1133">Transmembrane helix</keyword>
<keyword id="KW-0813">Transport</keyword>
<sequence>MDDAGEICSFSRSSSSAREDDEEDQRWAALEKLPTYDRARTALLAMPPDGELREVNVQRLAAVERRALLQRVAGVADDHARFLAKFKERVDRVGIKLPTVEVRYENLNIEAESYVGRRGLPTILNTYTIIMEGLTNALCITKKITHKIPILHNVSGIIKPHRMTLLLGPPGSGKTSLLLALAGTSTLKVSGTITYNGHSMEEFVPQRSAAYVSQHDVHMAELTVRETVNFAAKCQGVGHHYDLLMELLRREKEQNIKPDPEIDIYLKAATTGEQKAEVVTNHILKILGLDICADTIVGNNMLRGISGGQKKRLTTAEMIVTPGRALFMDEISTGLDSSTTFQIVNTIRQTIRILGGTAVIALLQPAPETYELFDDIILLSDGQVVYNGPRDHVLEFFKSVGFKCPERKCVADFLQEVTSRKDQKQYWIGSDDTYQYVPVTMIAEAFQSFHVGQAIRSELAIPFEKSKNHPAALATSKYGVSMKELLKANIYREILLMKRNSFLYIFKAIQLKLVAINAMTVFIRTNMYRDSIENGRSYMGALFYGMMMIVYSALAEMGPAIAKLPVLFKQRDLLYYPSWTYSLPSWIIKIPISFLNTTVWVFLTYYVIGFDPNVLRFFRQFLVLFVLCEVIYALFRFIVALTRHPVIASNMGPFCILIFMLSCGFILTRDDVKKWWIWLYWISPLMYALNALAVNEFLGQIWNKSILGYKGPLGRLVLGSSSFLPETKWYWISIGALLGYVLLFNVLYTICLTFLTHAKEIINDEANSYHATRHSSAGNKGMVLPFVPLSITFEDIRYSVDTPEAFKAKGMTEGRLELLKDISGSFRQGVLTALMGVSGAGKTTLLDVLAGRKTSGYVQGSITISGYPKKQETFARISGYCEQNDIHSPNVTVYESLMFSAWLRLPVEIDSATRKMFVYEVMELVEILSLKDALVGLPGVSGLSSERRKRLTIAVELVANPSIIFMDEPTSGLDARAAAIVMRAIRNTVDTGRTVVCTIHQPSIEIFESFDELFLMKQGGEEIYVGPIGRQSCELIKYFEAIQGVSKIKDGYNPSTWMLEVTSTTQEQRTCVDFSQIYKNSELYRRNKNLIKELSAPPEGSSDLSFPTQYSQLFLTQWLACLWKQHLSYWRNPPYIVVRYLFTIVVALLFGTMFWGIGKKRQNQQTLFSIMGAMYSACMAMGVQNSSSVQPAIFVERTIFYRERASHMYSALSYALGQVAIEFPYIFLQTIIYCVLVYAMVGYEWTCAKFLWYLFFMFFTLSYFTFYGMMMAGLTPNNAMSAVVSTAFYNIWNLFSGFLIPRIRIPVWWRWYYWMCPVAWTLNGLLTSQFGDVNDKFNNGVSVSDFIESYFGYKQDLLWVAAVAVVSFAILFAFLFGLSLRLFNFQKR</sequence>
<organism>
    <name type="scientific">Oryza sativa subsp. japonica</name>
    <name type="common">Rice</name>
    <dbReference type="NCBI Taxonomy" id="39947"/>
    <lineage>
        <taxon>Eukaryota</taxon>
        <taxon>Viridiplantae</taxon>
        <taxon>Streptophyta</taxon>
        <taxon>Embryophyta</taxon>
        <taxon>Tracheophyta</taxon>
        <taxon>Spermatophyta</taxon>
        <taxon>Magnoliopsida</taxon>
        <taxon>Liliopsida</taxon>
        <taxon>Poales</taxon>
        <taxon>Poaceae</taxon>
        <taxon>BOP clade</taxon>
        <taxon>Oryzoideae</taxon>
        <taxon>Oryzeae</taxon>
        <taxon>Oryzinae</taxon>
        <taxon>Oryza</taxon>
        <taxon>Oryza sativa</taxon>
    </lineage>
</organism>
<gene>
    <name evidence="6" type="primary">ABCG52</name>
    <name evidence="5" type="synonym">PDR18</name>
    <name evidence="8 9" type="ordered locus">Os09g0333600/Os09g0333500</name>
    <name type="ordered locus">LOC_Os09g16458/LOC_Os09g16449</name>
    <name evidence="10" type="ORF">OsJ_28934</name>
    <name evidence="7" type="ORF">P0466E03.13</name>
</gene>
<dbReference type="EMBL" id="AP005128">
    <property type="protein sequence ID" value="BAD28440.1"/>
    <property type="status" value="ALT_SEQ"/>
    <property type="molecule type" value="Genomic_DNA"/>
</dbReference>
<dbReference type="EMBL" id="AP008215">
    <property type="protein sequence ID" value="BAF24821.1"/>
    <property type="status" value="ALT_SEQ"/>
    <property type="molecule type" value="Genomic_DNA"/>
</dbReference>
<dbReference type="EMBL" id="AP008215">
    <property type="protein sequence ID" value="BAF24822.1"/>
    <property type="status" value="ALT_SEQ"/>
    <property type="molecule type" value="Genomic_DNA"/>
</dbReference>
<dbReference type="EMBL" id="AP014965">
    <property type="protein sequence ID" value="BAT07540.1"/>
    <property type="molecule type" value="Genomic_DNA"/>
</dbReference>
<dbReference type="EMBL" id="CM000146">
    <property type="protein sequence ID" value="EEE69497.1"/>
    <property type="status" value="ALT_SEQ"/>
    <property type="molecule type" value="Genomic_DNA"/>
</dbReference>
<dbReference type="EMBL" id="AK072827">
    <property type="status" value="NOT_ANNOTATED_CDS"/>
    <property type="molecule type" value="mRNA"/>
</dbReference>
<dbReference type="EMBL" id="AK108694">
    <property type="protein sequence ID" value="BAG98494.1"/>
    <property type="molecule type" value="mRNA"/>
</dbReference>
<dbReference type="SMR" id="B9G300"/>
<dbReference type="FunCoup" id="B9G300">
    <property type="interactions" value="61"/>
</dbReference>
<dbReference type="STRING" id="39947.B9G300"/>
<dbReference type="PaxDb" id="39947-B9G300"/>
<dbReference type="KEGG" id="dosa:Os09g0333500"/>
<dbReference type="KEGG" id="dosa:Os09g0333600"/>
<dbReference type="eggNOG" id="KOG0065">
    <property type="taxonomic scope" value="Eukaryota"/>
</dbReference>
<dbReference type="InParanoid" id="B9G300"/>
<dbReference type="OMA" id="NEVHADK"/>
<dbReference type="Proteomes" id="UP000000763">
    <property type="component" value="Chromosome 9"/>
</dbReference>
<dbReference type="Proteomes" id="UP000007752">
    <property type="component" value="Chromosome 9"/>
</dbReference>
<dbReference type="Proteomes" id="UP000059680">
    <property type="component" value="Chromosome 9"/>
</dbReference>
<dbReference type="GO" id="GO:0016020">
    <property type="term" value="C:membrane"/>
    <property type="evidence" value="ECO:0007669"/>
    <property type="project" value="UniProtKB-SubCell"/>
</dbReference>
<dbReference type="GO" id="GO:0140359">
    <property type="term" value="F:ABC-type transporter activity"/>
    <property type="evidence" value="ECO:0007669"/>
    <property type="project" value="InterPro"/>
</dbReference>
<dbReference type="GO" id="GO:0005524">
    <property type="term" value="F:ATP binding"/>
    <property type="evidence" value="ECO:0007669"/>
    <property type="project" value="UniProtKB-KW"/>
</dbReference>
<dbReference type="GO" id="GO:0016887">
    <property type="term" value="F:ATP hydrolysis activity"/>
    <property type="evidence" value="ECO:0007669"/>
    <property type="project" value="InterPro"/>
</dbReference>
<dbReference type="CDD" id="cd03233">
    <property type="entry name" value="ABCG_PDR_domain1"/>
    <property type="match status" value="1"/>
</dbReference>
<dbReference type="CDD" id="cd03232">
    <property type="entry name" value="ABCG_PDR_domain2"/>
    <property type="match status" value="1"/>
</dbReference>
<dbReference type="FunFam" id="3.40.50.300:FF:000532">
    <property type="entry name" value="ABC transporter G family member 34"/>
    <property type="match status" value="1"/>
</dbReference>
<dbReference type="FunFam" id="3.40.50.300:FF:000059">
    <property type="entry name" value="ABC transporter G family member 40"/>
    <property type="match status" value="1"/>
</dbReference>
<dbReference type="Gene3D" id="3.40.50.300">
    <property type="entry name" value="P-loop containing nucleotide triphosphate hydrolases"/>
    <property type="match status" value="2"/>
</dbReference>
<dbReference type="InterPro" id="IPR003593">
    <property type="entry name" value="AAA+_ATPase"/>
</dbReference>
<dbReference type="InterPro" id="IPR013525">
    <property type="entry name" value="ABC2_TM"/>
</dbReference>
<dbReference type="InterPro" id="IPR029481">
    <property type="entry name" value="ABC_trans_N"/>
</dbReference>
<dbReference type="InterPro" id="IPR003439">
    <property type="entry name" value="ABC_transporter-like_ATP-bd"/>
</dbReference>
<dbReference type="InterPro" id="IPR043926">
    <property type="entry name" value="ABCG_dom"/>
</dbReference>
<dbReference type="InterPro" id="IPR034001">
    <property type="entry name" value="ABCG_PDR_1"/>
</dbReference>
<dbReference type="InterPro" id="IPR034003">
    <property type="entry name" value="ABCG_PDR_2"/>
</dbReference>
<dbReference type="InterPro" id="IPR027417">
    <property type="entry name" value="P-loop_NTPase"/>
</dbReference>
<dbReference type="InterPro" id="IPR013581">
    <property type="entry name" value="PDR_assoc"/>
</dbReference>
<dbReference type="PANTHER" id="PTHR48040:SF35">
    <property type="entry name" value="ABC TRANSPORTER G FAMILY MEMBER 39-LIKE"/>
    <property type="match status" value="1"/>
</dbReference>
<dbReference type="PANTHER" id="PTHR48040">
    <property type="entry name" value="PLEIOTROPIC DRUG RESISTANCE PROTEIN 1-LIKE ISOFORM X1"/>
    <property type="match status" value="1"/>
</dbReference>
<dbReference type="Pfam" id="PF01061">
    <property type="entry name" value="ABC2_membrane"/>
    <property type="match status" value="2"/>
</dbReference>
<dbReference type="Pfam" id="PF19055">
    <property type="entry name" value="ABC2_membrane_7"/>
    <property type="match status" value="1"/>
</dbReference>
<dbReference type="Pfam" id="PF00005">
    <property type="entry name" value="ABC_tran"/>
    <property type="match status" value="2"/>
</dbReference>
<dbReference type="Pfam" id="PF14510">
    <property type="entry name" value="ABC_trans_N"/>
    <property type="match status" value="1"/>
</dbReference>
<dbReference type="Pfam" id="PF08370">
    <property type="entry name" value="PDR_assoc"/>
    <property type="match status" value="1"/>
</dbReference>
<dbReference type="SMART" id="SM00382">
    <property type="entry name" value="AAA"/>
    <property type="match status" value="2"/>
</dbReference>
<dbReference type="SUPFAM" id="SSF52540">
    <property type="entry name" value="P-loop containing nucleoside triphosphate hydrolases"/>
    <property type="match status" value="2"/>
</dbReference>
<dbReference type="PROSITE" id="PS50893">
    <property type="entry name" value="ABC_TRANSPORTER_2"/>
    <property type="match status" value="2"/>
</dbReference>
<accession>B9G300</accession>
<accession>Q0J2J4</accession>
<accession>Q6ESD0</accession>
<protein>
    <recommendedName>
        <fullName evidence="6">ABC transporter G family member 52</fullName>
        <shortName evidence="6">OsABCG52</shortName>
    </recommendedName>
    <alternativeName>
        <fullName evidence="5">Pleiotropic drug resistance protein 18</fullName>
        <shortName evidence="5">OsPDR18</shortName>
    </alternativeName>
</protein>
<evidence type="ECO:0000250" key="1"/>
<evidence type="ECO:0000255" key="2"/>
<evidence type="ECO:0000255" key="3">
    <source>
        <dbReference type="PROSITE-ProRule" id="PRU00434"/>
    </source>
</evidence>
<evidence type="ECO:0000256" key="4">
    <source>
        <dbReference type="SAM" id="MobiDB-lite"/>
    </source>
</evidence>
<evidence type="ECO:0000303" key="5">
    <source>
    </source>
</evidence>
<evidence type="ECO:0000305" key="6"/>
<evidence type="ECO:0000312" key="7">
    <source>
        <dbReference type="EMBL" id="BAD28440.1"/>
    </source>
</evidence>
<evidence type="ECO:0000312" key="8">
    <source>
        <dbReference type="EMBL" id="BAF24821.1"/>
    </source>
</evidence>
<evidence type="ECO:0000312" key="9">
    <source>
        <dbReference type="EMBL" id="BAF24822.1"/>
    </source>
</evidence>
<evidence type="ECO:0000312" key="10">
    <source>
        <dbReference type="EMBL" id="EEE69497.1"/>
    </source>
</evidence>
<reference key="1">
    <citation type="journal article" date="2005" name="Nature">
        <title>The map-based sequence of the rice genome.</title>
        <authorList>
            <consortium name="International rice genome sequencing project (IRGSP)"/>
        </authorList>
    </citation>
    <scope>NUCLEOTIDE SEQUENCE [LARGE SCALE GENOMIC DNA]</scope>
    <source>
        <strain>cv. Nipponbare</strain>
    </source>
</reference>
<reference key="2">
    <citation type="journal article" date="2008" name="Nucleic Acids Res.">
        <title>The rice annotation project database (RAP-DB): 2008 update.</title>
        <authorList>
            <consortium name="The rice annotation project (RAP)"/>
        </authorList>
    </citation>
    <scope>GENOME REANNOTATION</scope>
    <source>
        <strain>cv. Nipponbare</strain>
    </source>
</reference>
<reference key="3">
    <citation type="journal article" date="2013" name="Rice">
        <title>Improvement of the Oryza sativa Nipponbare reference genome using next generation sequence and optical map data.</title>
        <authorList>
            <person name="Kawahara Y."/>
            <person name="de la Bastide M."/>
            <person name="Hamilton J.P."/>
            <person name="Kanamori H."/>
            <person name="McCombie W.R."/>
            <person name="Ouyang S."/>
            <person name="Schwartz D.C."/>
            <person name="Tanaka T."/>
            <person name="Wu J."/>
            <person name="Zhou S."/>
            <person name="Childs K.L."/>
            <person name="Davidson R.M."/>
            <person name="Lin H."/>
            <person name="Quesada-Ocampo L."/>
            <person name="Vaillancourt B."/>
            <person name="Sakai H."/>
            <person name="Lee S.S."/>
            <person name="Kim J."/>
            <person name="Numa H."/>
            <person name="Itoh T."/>
            <person name="Buell C.R."/>
            <person name="Matsumoto T."/>
        </authorList>
    </citation>
    <scope>GENOME REANNOTATION</scope>
    <source>
        <strain>cv. Nipponbare</strain>
    </source>
</reference>
<reference key="4">
    <citation type="journal article" date="2005" name="PLoS Biol.">
        <title>The genomes of Oryza sativa: a history of duplications.</title>
        <authorList>
            <person name="Yu J."/>
            <person name="Wang J."/>
            <person name="Lin W."/>
            <person name="Li S."/>
            <person name="Li H."/>
            <person name="Zhou J."/>
            <person name="Ni P."/>
            <person name="Dong W."/>
            <person name="Hu S."/>
            <person name="Zeng C."/>
            <person name="Zhang J."/>
            <person name="Zhang Y."/>
            <person name="Li R."/>
            <person name="Xu Z."/>
            <person name="Li S."/>
            <person name="Li X."/>
            <person name="Zheng H."/>
            <person name="Cong L."/>
            <person name="Lin L."/>
            <person name="Yin J."/>
            <person name="Geng J."/>
            <person name="Li G."/>
            <person name="Shi J."/>
            <person name="Liu J."/>
            <person name="Lv H."/>
            <person name="Li J."/>
            <person name="Wang J."/>
            <person name="Deng Y."/>
            <person name="Ran L."/>
            <person name="Shi X."/>
            <person name="Wang X."/>
            <person name="Wu Q."/>
            <person name="Li C."/>
            <person name="Ren X."/>
            <person name="Wang J."/>
            <person name="Wang X."/>
            <person name="Li D."/>
            <person name="Liu D."/>
            <person name="Zhang X."/>
            <person name="Ji Z."/>
            <person name="Zhao W."/>
            <person name="Sun Y."/>
            <person name="Zhang Z."/>
            <person name="Bao J."/>
            <person name="Han Y."/>
            <person name="Dong L."/>
            <person name="Ji J."/>
            <person name="Chen P."/>
            <person name="Wu S."/>
            <person name="Liu J."/>
            <person name="Xiao Y."/>
            <person name="Bu D."/>
            <person name="Tan J."/>
            <person name="Yang L."/>
            <person name="Ye C."/>
            <person name="Zhang J."/>
            <person name="Xu J."/>
            <person name="Zhou Y."/>
            <person name="Yu Y."/>
            <person name="Zhang B."/>
            <person name="Zhuang S."/>
            <person name="Wei H."/>
            <person name="Liu B."/>
            <person name="Lei M."/>
            <person name="Yu H."/>
            <person name="Li Y."/>
            <person name="Xu H."/>
            <person name="Wei S."/>
            <person name="He X."/>
            <person name="Fang L."/>
            <person name="Zhang Z."/>
            <person name="Zhang Y."/>
            <person name="Huang X."/>
            <person name="Su Z."/>
            <person name="Tong W."/>
            <person name="Li J."/>
            <person name="Tong Z."/>
            <person name="Li S."/>
            <person name="Ye J."/>
            <person name="Wang L."/>
            <person name="Fang L."/>
            <person name="Lei T."/>
            <person name="Chen C.-S."/>
            <person name="Chen H.-C."/>
            <person name="Xu Z."/>
            <person name="Li H."/>
            <person name="Huang H."/>
            <person name="Zhang F."/>
            <person name="Xu H."/>
            <person name="Li N."/>
            <person name="Zhao C."/>
            <person name="Li S."/>
            <person name="Dong L."/>
            <person name="Huang Y."/>
            <person name="Li L."/>
            <person name="Xi Y."/>
            <person name="Qi Q."/>
            <person name="Li W."/>
            <person name="Zhang B."/>
            <person name="Hu W."/>
            <person name="Zhang Y."/>
            <person name="Tian X."/>
            <person name="Jiao Y."/>
            <person name="Liang X."/>
            <person name="Jin J."/>
            <person name="Gao L."/>
            <person name="Zheng W."/>
            <person name="Hao B."/>
            <person name="Liu S.-M."/>
            <person name="Wang W."/>
            <person name="Yuan L."/>
            <person name="Cao M."/>
            <person name="McDermott J."/>
            <person name="Samudrala R."/>
            <person name="Wang J."/>
            <person name="Wong G.K.-S."/>
            <person name="Yang H."/>
        </authorList>
    </citation>
    <scope>NUCLEOTIDE SEQUENCE [LARGE SCALE GENOMIC DNA]</scope>
    <source>
        <strain>cv. Nipponbare</strain>
    </source>
</reference>
<reference key="5">
    <citation type="journal article" date="2003" name="Science">
        <title>Collection, mapping, and annotation of over 28,000 cDNA clones from japonica rice.</title>
        <authorList>
            <consortium name="The rice full-length cDNA consortium"/>
        </authorList>
    </citation>
    <scope>NUCLEOTIDE SEQUENCE [LARGE SCALE MRNA] (ISOFORMS 1 AND 2)</scope>
    <source>
        <strain>cv. Nipponbare</strain>
    </source>
</reference>
<reference key="6">
    <citation type="journal article" date="2006" name="FEBS Lett.">
        <title>Organization and function of the plant pleiotropic drug resistance ABC transporter family.</title>
        <authorList>
            <person name="Crouzet J."/>
            <person name="Trombik T."/>
            <person name="Fraysse A.S."/>
            <person name="Boutry M."/>
        </authorList>
    </citation>
    <scope>GENE FAMILY</scope>
    <scope>NOMENCLATURE</scope>
</reference>
<reference key="7">
    <citation type="journal article" date="2008" name="Trends Plant Sci.">
        <title>Plant ABC proteins - a unified nomenclature and updated inventory.</title>
        <authorList>
            <person name="Verrier P.J."/>
            <person name="Bird D."/>
            <person name="Burla B."/>
            <person name="Dassa E."/>
            <person name="Forestier C."/>
            <person name="Geisler M."/>
            <person name="Klein M."/>
            <person name="Kolukisaoglu H.U."/>
            <person name="Lee Y."/>
            <person name="Martinoia E."/>
            <person name="Murphy A."/>
            <person name="Rea P.A."/>
            <person name="Samuels L."/>
            <person name="Schulz B."/>
            <person name="Spalding E.J."/>
            <person name="Yazaki K."/>
            <person name="Theodoulou F.L."/>
        </authorList>
    </citation>
    <scope>GENE FAMILY</scope>
    <scope>NOMENCLATURE</scope>
</reference>